<accession>B3PM75</accession>
<keyword id="KW-1185">Reference proteome</keyword>
<keyword id="KW-0687">Ribonucleoprotein</keyword>
<keyword id="KW-0689">Ribosomal protein</keyword>
<sequence>MAKLTKAEFVSALKEMNIKEVMELIDGLKEEFGIDPTAVVAAAAAPAAEAAEEKTTFNVTLKSDGGNKLAVIKAVKDLLGLGLMDAKKLVESAPVLLKENVKKEEAEELKAKLTEAKAEITLD</sequence>
<gene>
    <name evidence="1" type="primary">rplL</name>
    <name type="ordered locus">MARTH_orf211</name>
</gene>
<evidence type="ECO:0000255" key="1">
    <source>
        <dbReference type="HAMAP-Rule" id="MF_00368"/>
    </source>
</evidence>
<evidence type="ECO:0000305" key="2"/>
<dbReference type="EMBL" id="CP001047">
    <property type="protein sequence ID" value="ACF07127.1"/>
    <property type="molecule type" value="Genomic_DNA"/>
</dbReference>
<dbReference type="RefSeq" id="WP_012498084.1">
    <property type="nucleotide sequence ID" value="NC_011025.1"/>
</dbReference>
<dbReference type="SMR" id="B3PM75"/>
<dbReference type="STRING" id="243272.MARTH_orf211"/>
<dbReference type="KEGG" id="mat:MARTH_orf211"/>
<dbReference type="eggNOG" id="COG0222">
    <property type="taxonomic scope" value="Bacteria"/>
</dbReference>
<dbReference type="HOGENOM" id="CLU_086499_3_2_14"/>
<dbReference type="Proteomes" id="UP000008812">
    <property type="component" value="Chromosome"/>
</dbReference>
<dbReference type="GO" id="GO:0022625">
    <property type="term" value="C:cytosolic large ribosomal subunit"/>
    <property type="evidence" value="ECO:0007669"/>
    <property type="project" value="TreeGrafter"/>
</dbReference>
<dbReference type="GO" id="GO:0003729">
    <property type="term" value="F:mRNA binding"/>
    <property type="evidence" value="ECO:0007669"/>
    <property type="project" value="TreeGrafter"/>
</dbReference>
<dbReference type="GO" id="GO:0003735">
    <property type="term" value="F:structural constituent of ribosome"/>
    <property type="evidence" value="ECO:0007669"/>
    <property type="project" value="InterPro"/>
</dbReference>
<dbReference type="GO" id="GO:0006412">
    <property type="term" value="P:translation"/>
    <property type="evidence" value="ECO:0007669"/>
    <property type="project" value="UniProtKB-UniRule"/>
</dbReference>
<dbReference type="CDD" id="cd00387">
    <property type="entry name" value="Ribosomal_L7_L12"/>
    <property type="match status" value="1"/>
</dbReference>
<dbReference type="FunFam" id="3.30.1390.10:FF:000001">
    <property type="entry name" value="50S ribosomal protein L7/L12"/>
    <property type="match status" value="1"/>
</dbReference>
<dbReference type="Gene3D" id="3.30.1390.10">
    <property type="match status" value="1"/>
</dbReference>
<dbReference type="Gene3D" id="1.20.5.710">
    <property type="entry name" value="Single helix bin"/>
    <property type="match status" value="1"/>
</dbReference>
<dbReference type="HAMAP" id="MF_00368">
    <property type="entry name" value="Ribosomal_bL12"/>
    <property type="match status" value="1"/>
</dbReference>
<dbReference type="InterPro" id="IPR000206">
    <property type="entry name" value="Ribosomal_bL12"/>
</dbReference>
<dbReference type="InterPro" id="IPR013823">
    <property type="entry name" value="Ribosomal_bL12_C"/>
</dbReference>
<dbReference type="InterPro" id="IPR014719">
    <property type="entry name" value="Ribosomal_bL12_C/ClpS-like"/>
</dbReference>
<dbReference type="InterPro" id="IPR008932">
    <property type="entry name" value="Ribosomal_bL12_oligo"/>
</dbReference>
<dbReference type="InterPro" id="IPR036235">
    <property type="entry name" value="Ribosomal_bL12_oligo_N_sf"/>
</dbReference>
<dbReference type="NCBIfam" id="TIGR00855">
    <property type="entry name" value="L12"/>
    <property type="match status" value="1"/>
</dbReference>
<dbReference type="PANTHER" id="PTHR45987">
    <property type="entry name" value="39S RIBOSOMAL PROTEIN L12"/>
    <property type="match status" value="1"/>
</dbReference>
<dbReference type="PANTHER" id="PTHR45987:SF4">
    <property type="entry name" value="LARGE RIBOSOMAL SUBUNIT PROTEIN BL12M"/>
    <property type="match status" value="1"/>
</dbReference>
<dbReference type="Pfam" id="PF00542">
    <property type="entry name" value="Ribosomal_L12"/>
    <property type="match status" value="1"/>
</dbReference>
<dbReference type="Pfam" id="PF16320">
    <property type="entry name" value="Ribosomal_L12_N"/>
    <property type="match status" value="1"/>
</dbReference>
<dbReference type="SUPFAM" id="SSF54736">
    <property type="entry name" value="ClpS-like"/>
    <property type="match status" value="1"/>
</dbReference>
<dbReference type="SUPFAM" id="SSF48300">
    <property type="entry name" value="Ribosomal protein L7/12, oligomerisation (N-terminal) domain"/>
    <property type="match status" value="1"/>
</dbReference>
<protein>
    <recommendedName>
        <fullName evidence="1">Large ribosomal subunit protein bL12</fullName>
    </recommendedName>
    <alternativeName>
        <fullName evidence="2">50S ribosomal protein L7/L12</fullName>
    </alternativeName>
</protein>
<comment type="function">
    <text evidence="1">Forms part of the ribosomal stalk which helps the ribosome interact with GTP-bound translation factors. Is thus essential for accurate translation.</text>
</comment>
<comment type="subunit">
    <text evidence="1">Homodimer. Part of the ribosomal stalk of the 50S ribosomal subunit. Forms a multimeric L10(L12)X complex, where L10 forms an elongated spine to which 2 to 4 L12 dimers bind in a sequential fashion. Binds GTP-bound translation factors.</text>
</comment>
<comment type="similarity">
    <text evidence="1">Belongs to the bacterial ribosomal protein bL12 family.</text>
</comment>
<feature type="chain" id="PRO_1000195810" description="Large ribosomal subunit protein bL12">
    <location>
        <begin position="1"/>
        <end position="123"/>
    </location>
</feature>
<proteinExistence type="inferred from homology"/>
<organism>
    <name type="scientific">Metamycoplasma arthritidis (strain 158L3-1)</name>
    <name type="common">Mycoplasma arthritidis</name>
    <dbReference type="NCBI Taxonomy" id="243272"/>
    <lineage>
        <taxon>Bacteria</taxon>
        <taxon>Bacillati</taxon>
        <taxon>Mycoplasmatota</taxon>
        <taxon>Mycoplasmoidales</taxon>
        <taxon>Metamycoplasmataceae</taxon>
        <taxon>Metamycoplasma</taxon>
    </lineage>
</organism>
<reference key="1">
    <citation type="journal article" date="2008" name="Infect. Immun.">
        <title>Genome of Mycoplasma arthritidis.</title>
        <authorList>
            <person name="Dybvig K."/>
            <person name="Zuhua C."/>
            <person name="Lao P."/>
            <person name="Jordan D.S."/>
            <person name="French C.T."/>
            <person name="Tu A.H."/>
            <person name="Loraine A.E."/>
        </authorList>
    </citation>
    <scope>NUCLEOTIDE SEQUENCE [LARGE SCALE GENOMIC DNA]</scope>
    <source>
        <strain>158L3-1</strain>
    </source>
</reference>
<name>RL7_META1</name>